<reference key="1">
    <citation type="journal article" date="2005" name="Nature">
        <title>Genomic sequence of the pathogenic and allergenic filamentous fungus Aspergillus fumigatus.</title>
        <authorList>
            <person name="Nierman W.C."/>
            <person name="Pain A."/>
            <person name="Anderson M.J."/>
            <person name="Wortman J.R."/>
            <person name="Kim H.S."/>
            <person name="Arroyo J."/>
            <person name="Berriman M."/>
            <person name="Abe K."/>
            <person name="Archer D.B."/>
            <person name="Bermejo C."/>
            <person name="Bennett J.W."/>
            <person name="Bowyer P."/>
            <person name="Chen D."/>
            <person name="Collins M."/>
            <person name="Coulsen R."/>
            <person name="Davies R."/>
            <person name="Dyer P.S."/>
            <person name="Farman M.L."/>
            <person name="Fedorova N."/>
            <person name="Fedorova N.D."/>
            <person name="Feldblyum T.V."/>
            <person name="Fischer R."/>
            <person name="Fosker N."/>
            <person name="Fraser A."/>
            <person name="Garcia J.L."/>
            <person name="Garcia M.J."/>
            <person name="Goble A."/>
            <person name="Goldman G.H."/>
            <person name="Gomi K."/>
            <person name="Griffith-Jones S."/>
            <person name="Gwilliam R."/>
            <person name="Haas B.J."/>
            <person name="Haas H."/>
            <person name="Harris D.E."/>
            <person name="Horiuchi H."/>
            <person name="Huang J."/>
            <person name="Humphray S."/>
            <person name="Jimenez J."/>
            <person name="Keller N."/>
            <person name="Khouri H."/>
            <person name="Kitamoto K."/>
            <person name="Kobayashi T."/>
            <person name="Konzack S."/>
            <person name="Kulkarni R."/>
            <person name="Kumagai T."/>
            <person name="Lafton A."/>
            <person name="Latge J.-P."/>
            <person name="Li W."/>
            <person name="Lord A."/>
            <person name="Lu C."/>
            <person name="Majoros W.H."/>
            <person name="May G.S."/>
            <person name="Miller B.L."/>
            <person name="Mohamoud Y."/>
            <person name="Molina M."/>
            <person name="Monod M."/>
            <person name="Mouyna I."/>
            <person name="Mulligan S."/>
            <person name="Murphy L.D."/>
            <person name="O'Neil S."/>
            <person name="Paulsen I."/>
            <person name="Penalva M.A."/>
            <person name="Pertea M."/>
            <person name="Price C."/>
            <person name="Pritchard B.L."/>
            <person name="Quail M.A."/>
            <person name="Rabbinowitsch E."/>
            <person name="Rawlins N."/>
            <person name="Rajandream M.A."/>
            <person name="Reichard U."/>
            <person name="Renauld H."/>
            <person name="Robson G.D."/>
            <person name="Rodriguez de Cordoba S."/>
            <person name="Rodriguez-Pena J.M."/>
            <person name="Ronning C.M."/>
            <person name="Rutter S."/>
            <person name="Salzberg S.L."/>
            <person name="Sanchez M."/>
            <person name="Sanchez-Ferrero J.C."/>
            <person name="Saunders D."/>
            <person name="Seeger K."/>
            <person name="Squares R."/>
            <person name="Squares S."/>
            <person name="Takeuchi M."/>
            <person name="Tekaia F."/>
            <person name="Turner G."/>
            <person name="Vazquez de Aldana C.R."/>
            <person name="Weidman J."/>
            <person name="White O."/>
            <person name="Woodward J.R."/>
            <person name="Yu J.-H."/>
            <person name="Fraser C.M."/>
            <person name="Galagan J.E."/>
            <person name="Asai K."/>
            <person name="Machida M."/>
            <person name="Hall N."/>
            <person name="Barrell B.G."/>
            <person name="Denning D.W."/>
        </authorList>
    </citation>
    <scope>NUCLEOTIDE SEQUENCE [LARGE SCALE GENOMIC DNA]</scope>
    <source>
        <strain>ATCC MYA-4609 / CBS 101355 / FGSC A1100 / Af293</strain>
    </source>
</reference>
<accession>Q4WHZ9</accession>
<sequence>MPIANGDSLGCAMKADIQDYTKALEILEKEYTTRDGLDVDTLLDSDKHGALTYNDFLILPGYIGFPASDVTLDTPVTKRVSLKVPLLSSPMDTVTEHNMAIHMALLGGLGVIHHNCSPEDQAEMVRKVKRYENGFILDPVVLSPKATVGEAKALKAKWGFGGFPVTENGTLRSKLVGMVTSRDIQFHTNLDDPVTAIMSTDLVTAPAGTTLAEANDVLRSSKKGKLPIVDADGNLVSLLSRSDLMKNLHYPLASKLPDSKQLICAAAIGTREEDKHRLKLLVEAGLDIVVLDSSQGNSIYQIEMIKWVKKTFPEIDVIAGNVVTREQAAALIAAGADGLRIGMGSGSACITQEVMAVGRPQAVAVRSVASFAARFGVPCIADGGIQNVGHIVKGLAMGASTVMMGGLLAGTTESPGEYFVSNEGQLVKAYRGMGSIAAMEDKKAGAGSKDSKASNAGTARYFSEKDRVLVAQGVAGSVLDRGSVTKFVPYLVAGVQHSLQDIGVKSLDELHDGVNKGIVRFEMRSASAMAEGNVHGLHSYDKKLYS</sequence>
<name>IMDH_ASPFU</name>
<comment type="function">
    <text evidence="1">Catalyzes the conversion of inosine 5'-phosphate (IMP) to xanthosine 5'-phosphate (XMP), the first committed and rate-limiting step in the de novo synthesis of guanine nucleotides, and therefore plays an important role in the regulation of cell growth.</text>
</comment>
<comment type="catalytic activity">
    <reaction evidence="1">
        <text>IMP + NAD(+) + H2O = XMP + NADH + H(+)</text>
        <dbReference type="Rhea" id="RHEA:11708"/>
        <dbReference type="ChEBI" id="CHEBI:15377"/>
        <dbReference type="ChEBI" id="CHEBI:15378"/>
        <dbReference type="ChEBI" id="CHEBI:57464"/>
        <dbReference type="ChEBI" id="CHEBI:57540"/>
        <dbReference type="ChEBI" id="CHEBI:57945"/>
        <dbReference type="ChEBI" id="CHEBI:58053"/>
        <dbReference type="EC" id="1.1.1.205"/>
    </reaction>
</comment>
<comment type="cofactor">
    <cofactor evidence="1">
        <name>K(+)</name>
        <dbReference type="ChEBI" id="CHEBI:29103"/>
    </cofactor>
</comment>
<comment type="activity regulation">
    <text evidence="1">Mycophenolic acid (MPA) is a non-competitive inhibitor that prevents formation of the closed enzyme conformation by binding to the same site as the amobile flap. In contrast, mizoribine monophosphate (MZP) is a competitive inhibitor that induces the closed conformation. MPA is a potent inhibitor of mammalian IMPDHs but a poor inhibitor of the bacterial enzymes. MZP is a more potent inhibitor of bacterial IMPDH.</text>
</comment>
<comment type="pathway">
    <text evidence="1">Purine metabolism; XMP biosynthesis via de novo pathway; XMP from IMP: step 1/1.</text>
</comment>
<comment type="subunit">
    <text evidence="1">Homotetramer.</text>
</comment>
<comment type="subcellular location">
    <subcellularLocation>
        <location evidence="1">Cytoplasm</location>
    </subcellularLocation>
</comment>
<comment type="similarity">
    <text evidence="1">Belongs to the IMPDH/GMPR family.</text>
</comment>
<gene>
    <name type="ORF">AFUA_2G03610</name>
</gene>
<organism>
    <name type="scientific">Aspergillus fumigatus (strain ATCC MYA-4609 / CBS 101355 / FGSC A1100 / Af293)</name>
    <name type="common">Neosartorya fumigata</name>
    <dbReference type="NCBI Taxonomy" id="330879"/>
    <lineage>
        <taxon>Eukaryota</taxon>
        <taxon>Fungi</taxon>
        <taxon>Dikarya</taxon>
        <taxon>Ascomycota</taxon>
        <taxon>Pezizomycotina</taxon>
        <taxon>Eurotiomycetes</taxon>
        <taxon>Eurotiomycetidae</taxon>
        <taxon>Eurotiales</taxon>
        <taxon>Aspergillaceae</taxon>
        <taxon>Aspergillus</taxon>
        <taxon>Aspergillus subgen. Fumigati</taxon>
    </lineage>
</organism>
<feature type="chain" id="PRO_0000415686" description="Inosine-5'-monophosphate dehydrogenase">
    <location>
        <begin position="1"/>
        <end position="546"/>
    </location>
</feature>
<feature type="domain" description="CBS 1" evidence="1">
    <location>
        <begin position="135"/>
        <end position="197"/>
    </location>
</feature>
<feature type="domain" description="CBS 2" evidence="1">
    <location>
        <begin position="198"/>
        <end position="254"/>
    </location>
</feature>
<feature type="active site" description="Thioimidate intermediate" evidence="1">
    <location>
        <position position="349"/>
    </location>
</feature>
<feature type="active site" description="Proton acceptor" evidence="1">
    <location>
        <position position="460"/>
    </location>
</feature>
<feature type="binding site" evidence="1">
    <location>
        <begin position="292"/>
        <end position="294"/>
    </location>
    <ligand>
        <name>NAD(+)</name>
        <dbReference type="ChEBI" id="CHEBI:57540"/>
    </ligand>
</feature>
<feature type="binding site" evidence="1">
    <location>
        <begin position="342"/>
        <end position="344"/>
    </location>
    <ligand>
        <name>NAD(+)</name>
        <dbReference type="ChEBI" id="CHEBI:57540"/>
    </ligand>
</feature>
<feature type="binding site" description="in other chain" evidence="1">
    <location>
        <position position="344"/>
    </location>
    <ligand>
        <name>K(+)</name>
        <dbReference type="ChEBI" id="CHEBI:29103"/>
        <note>ligand shared between two tetrameric partners</note>
    </ligand>
</feature>
<feature type="binding site" description="in other chain" evidence="1">
    <location>
        <position position="346"/>
    </location>
    <ligand>
        <name>K(+)</name>
        <dbReference type="ChEBI" id="CHEBI:29103"/>
        <note>ligand shared between two tetrameric partners</note>
    </ligand>
</feature>
<feature type="binding site" evidence="1">
    <location>
        <position position="347"/>
    </location>
    <ligand>
        <name>IMP</name>
        <dbReference type="ChEBI" id="CHEBI:58053"/>
    </ligand>
</feature>
<feature type="binding site" description="in other chain" evidence="1">
    <location>
        <position position="349"/>
    </location>
    <ligand>
        <name>K(+)</name>
        <dbReference type="ChEBI" id="CHEBI:29103"/>
        <note>ligand shared between two tetrameric partners</note>
    </ligand>
</feature>
<feature type="binding site" evidence="1">
    <location>
        <begin position="382"/>
        <end position="384"/>
    </location>
    <ligand>
        <name>IMP</name>
        <dbReference type="ChEBI" id="CHEBI:58053"/>
    </ligand>
</feature>
<feature type="binding site" evidence="1">
    <location>
        <begin position="405"/>
        <end position="406"/>
    </location>
    <ligand>
        <name>IMP</name>
        <dbReference type="ChEBI" id="CHEBI:58053"/>
    </ligand>
</feature>
<feature type="binding site" evidence="1">
    <location>
        <begin position="430"/>
        <end position="434"/>
    </location>
    <ligand>
        <name>IMP</name>
        <dbReference type="ChEBI" id="CHEBI:58053"/>
    </ligand>
</feature>
<feature type="binding site" evidence="1">
    <location>
        <position position="472"/>
    </location>
    <ligand>
        <name>IMP</name>
        <dbReference type="ChEBI" id="CHEBI:58053"/>
    </ligand>
</feature>
<feature type="binding site" evidence="1">
    <location>
        <position position="531"/>
    </location>
    <ligand>
        <name>K(+)</name>
        <dbReference type="ChEBI" id="CHEBI:29103"/>
        <note>ligand shared between two tetrameric partners</note>
    </ligand>
</feature>
<feature type="binding site" evidence="1">
    <location>
        <position position="532"/>
    </location>
    <ligand>
        <name>K(+)</name>
        <dbReference type="ChEBI" id="CHEBI:29103"/>
        <note>ligand shared between two tetrameric partners</note>
    </ligand>
</feature>
<protein>
    <recommendedName>
        <fullName evidence="1">Inosine-5'-monophosphate dehydrogenase</fullName>
        <shortName evidence="1">IMP dehydrogenase</shortName>
        <shortName evidence="1">IMPD</shortName>
        <shortName evidence="1">IMPDH</shortName>
        <ecNumber evidence="1">1.1.1.205</ecNumber>
    </recommendedName>
</protein>
<keyword id="KW-0129">CBS domain</keyword>
<keyword id="KW-0963">Cytoplasm</keyword>
<keyword id="KW-0332">GMP biosynthesis</keyword>
<keyword id="KW-0479">Metal-binding</keyword>
<keyword id="KW-0520">NAD</keyword>
<keyword id="KW-0560">Oxidoreductase</keyword>
<keyword id="KW-0630">Potassium</keyword>
<keyword id="KW-0658">Purine biosynthesis</keyword>
<keyword id="KW-1185">Reference proteome</keyword>
<keyword id="KW-0677">Repeat</keyword>
<evidence type="ECO:0000255" key="1">
    <source>
        <dbReference type="HAMAP-Rule" id="MF_03156"/>
    </source>
</evidence>
<proteinExistence type="inferred from homology"/>
<dbReference type="EC" id="1.1.1.205" evidence="1"/>
<dbReference type="EMBL" id="AAHF01000008">
    <property type="protein sequence ID" value="EAL87456.1"/>
    <property type="molecule type" value="Genomic_DNA"/>
</dbReference>
<dbReference type="RefSeq" id="XP_749494.1">
    <property type="nucleotide sequence ID" value="XM_744401.1"/>
</dbReference>
<dbReference type="SMR" id="Q4WHZ9"/>
<dbReference type="FunCoup" id="Q4WHZ9">
    <property type="interactions" value="1118"/>
</dbReference>
<dbReference type="STRING" id="330879.Q4WHZ9"/>
<dbReference type="EnsemblFungi" id="EAL87456">
    <property type="protein sequence ID" value="EAL87456"/>
    <property type="gene ID" value="AFUA_2G03610"/>
</dbReference>
<dbReference type="GeneID" id="3507220"/>
<dbReference type="KEGG" id="afm:AFUA_2G03610"/>
<dbReference type="VEuPathDB" id="FungiDB:Afu2g03610"/>
<dbReference type="eggNOG" id="KOG2550">
    <property type="taxonomic scope" value="Eukaryota"/>
</dbReference>
<dbReference type="HOGENOM" id="CLU_022552_2_1_1"/>
<dbReference type="InParanoid" id="Q4WHZ9"/>
<dbReference type="OMA" id="MGYCGAK"/>
<dbReference type="OrthoDB" id="416622at2759"/>
<dbReference type="UniPathway" id="UPA00601">
    <property type="reaction ID" value="UER00295"/>
</dbReference>
<dbReference type="Proteomes" id="UP000002530">
    <property type="component" value="Chromosome 2"/>
</dbReference>
<dbReference type="GO" id="GO:0005737">
    <property type="term" value="C:cytoplasm"/>
    <property type="evidence" value="ECO:0000318"/>
    <property type="project" value="GO_Central"/>
</dbReference>
<dbReference type="GO" id="GO:0003938">
    <property type="term" value="F:IMP dehydrogenase activity"/>
    <property type="evidence" value="ECO:0000318"/>
    <property type="project" value="GO_Central"/>
</dbReference>
<dbReference type="GO" id="GO:0046872">
    <property type="term" value="F:metal ion binding"/>
    <property type="evidence" value="ECO:0007669"/>
    <property type="project" value="UniProtKB-UniRule"/>
</dbReference>
<dbReference type="GO" id="GO:0000166">
    <property type="term" value="F:nucleotide binding"/>
    <property type="evidence" value="ECO:0007669"/>
    <property type="project" value="UniProtKB-UniRule"/>
</dbReference>
<dbReference type="GO" id="GO:0006177">
    <property type="term" value="P:GMP biosynthetic process"/>
    <property type="evidence" value="ECO:0007669"/>
    <property type="project" value="UniProtKB-UniRule"/>
</dbReference>
<dbReference type="GO" id="GO:0006183">
    <property type="term" value="P:GTP biosynthetic process"/>
    <property type="evidence" value="ECO:0000318"/>
    <property type="project" value="GO_Central"/>
</dbReference>
<dbReference type="CDD" id="cd04601">
    <property type="entry name" value="CBS_pair_IMPDH"/>
    <property type="match status" value="1"/>
</dbReference>
<dbReference type="CDD" id="cd00381">
    <property type="entry name" value="IMPDH"/>
    <property type="match status" value="1"/>
</dbReference>
<dbReference type="FunFam" id="3.20.20.70:FF:000007">
    <property type="entry name" value="Chromosome 19 SCAF14664, whole genome shotgun sequence"/>
    <property type="match status" value="1"/>
</dbReference>
<dbReference type="Gene3D" id="3.20.20.70">
    <property type="entry name" value="Aldolase class I"/>
    <property type="match status" value="1"/>
</dbReference>
<dbReference type="HAMAP" id="MF_01964">
    <property type="entry name" value="IMPDH"/>
    <property type="match status" value="1"/>
</dbReference>
<dbReference type="InterPro" id="IPR013785">
    <property type="entry name" value="Aldolase_TIM"/>
</dbReference>
<dbReference type="InterPro" id="IPR000644">
    <property type="entry name" value="CBS_dom"/>
</dbReference>
<dbReference type="InterPro" id="IPR046342">
    <property type="entry name" value="CBS_dom_sf"/>
</dbReference>
<dbReference type="InterPro" id="IPR005990">
    <property type="entry name" value="IMP_DH"/>
</dbReference>
<dbReference type="InterPro" id="IPR015875">
    <property type="entry name" value="IMP_DH/GMP_Rdtase_CS"/>
</dbReference>
<dbReference type="InterPro" id="IPR001093">
    <property type="entry name" value="IMP_DH_GMPRt"/>
</dbReference>
<dbReference type="NCBIfam" id="TIGR01302">
    <property type="entry name" value="IMP_dehydrog"/>
    <property type="match status" value="1"/>
</dbReference>
<dbReference type="PANTHER" id="PTHR11911:SF111">
    <property type="entry name" value="INOSINE-5'-MONOPHOSPHATE DEHYDROGENASE"/>
    <property type="match status" value="1"/>
</dbReference>
<dbReference type="PANTHER" id="PTHR11911">
    <property type="entry name" value="INOSINE-5-MONOPHOSPHATE DEHYDROGENASE RELATED"/>
    <property type="match status" value="1"/>
</dbReference>
<dbReference type="Pfam" id="PF00571">
    <property type="entry name" value="CBS"/>
    <property type="match status" value="2"/>
</dbReference>
<dbReference type="Pfam" id="PF00478">
    <property type="entry name" value="IMPDH"/>
    <property type="match status" value="1"/>
</dbReference>
<dbReference type="PIRSF" id="PIRSF000130">
    <property type="entry name" value="IMPDH"/>
    <property type="match status" value="1"/>
</dbReference>
<dbReference type="SMART" id="SM00116">
    <property type="entry name" value="CBS"/>
    <property type="match status" value="2"/>
</dbReference>
<dbReference type="SMART" id="SM01240">
    <property type="entry name" value="IMPDH"/>
    <property type="match status" value="1"/>
</dbReference>
<dbReference type="SUPFAM" id="SSF54631">
    <property type="entry name" value="CBS-domain pair"/>
    <property type="match status" value="1"/>
</dbReference>
<dbReference type="SUPFAM" id="SSF51412">
    <property type="entry name" value="Inosine monophosphate dehydrogenase (IMPDH)"/>
    <property type="match status" value="1"/>
</dbReference>
<dbReference type="PROSITE" id="PS51371">
    <property type="entry name" value="CBS"/>
    <property type="match status" value="2"/>
</dbReference>
<dbReference type="PROSITE" id="PS00487">
    <property type="entry name" value="IMP_DH_GMP_RED"/>
    <property type="match status" value="1"/>
</dbReference>